<evidence type="ECO:0000255" key="1">
    <source>
        <dbReference type="HAMAP-Rule" id="MF_01542"/>
    </source>
</evidence>
<reference key="1">
    <citation type="journal article" date="2009" name="Appl. Environ. Microbiol.">
        <title>Genome analysis of the meat starter culture bacterium Staphylococcus carnosus TM300.</title>
        <authorList>
            <person name="Rosenstein R."/>
            <person name="Nerz C."/>
            <person name="Biswas L."/>
            <person name="Resch A."/>
            <person name="Raddatz G."/>
            <person name="Schuster S.C."/>
            <person name="Goetz F."/>
        </authorList>
    </citation>
    <scope>NUCLEOTIDE SEQUENCE [LARGE SCALE GENOMIC DNA]</scope>
    <source>
        <strain>TM300</strain>
    </source>
</reference>
<dbReference type="EMBL" id="AM295250">
    <property type="protein sequence ID" value="CAL27458.1"/>
    <property type="molecule type" value="Genomic_DNA"/>
</dbReference>
<dbReference type="RefSeq" id="WP_015899802.1">
    <property type="nucleotide sequence ID" value="NC_012121.1"/>
</dbReference>
<dbReference type="SMR" id="B9DIW9"/>
<dbReference type="KEGG" id="sca:SCA_0544"/>
<dbReference type="eggNOG" id="COG4844">
    <property type="taxonomic scope" value="Bacteria"/>
</dbReference>
<dbReference type="HOGENOM" id="CLU_182025_0_0_9"/>
<dbReference type="OrthoDB" id="1684419at2"/>
<dbReference type="BioCyc" id="SCAR396513:SCA_RS02785-MONOMER"/>
<dbReference type="Proteomes" id="UP000000444">
    <property type="component" value="Chromosome"/>
</dbReference>
<dbReference type="HAMAP" id="MF_01542">
    <property type="entry name" value="UPF0349"/>
    <property type="match status" value="1"/>
</dbReference>
<dbReference type="InterPro" id="IPR009910">
    <property type="entry name" value="DUF1450"/>
</dbReference>
<dbReference type="InterPro" id="IPR022916">
    <property type="entry name" value="UPF0349"/>
</dbReference>
<dbReference type="NCBIfam" id="NF010190">
    <property type="entry name" value="PRK13669.1"/>
    <property type="match status" value="1"/>
</dbReference>
<dbReference type="Pfam" id="PF07293">
    <property type="entry name" value="DUF1450"/>
    <property type="match status" value="1"/>
</dbReference>
<accession>B9DIW9</accession>
<sequence>MNPIVEFCISNMAKGGDYVYNKLDQDPGVDVLEYGCLQNCGVCSSGLYALVNGDIVEGDSPDDLLQNIYKHIEETWIF</sequence>
<comment type="similarity">
    <text evidence="1">Belongs to the UPF0349 family.</text>
</comment>
<keyword id="KW-1185">Reference proteome</keyword>
<protein>
    <recommendedName>
        <fullName evidence="1">UPF0349 protein Sca_0544</fullName>
    </recommendedName>
</protein>
<organism>
    <name type="scientific">Staphylococcus carnosus (strain TM300)</name>
    <dbReference type="NCBI Taxonomy" id="396513"/>
    <lineage>
        <taxon>Bacteria</taxon>
        <taxon>Bacillati</taxon>
        <taxon>Bacillota</taxon>
        <taxon>Bacilli</taxon>
        <taxon>Bacillales</taxon>
        <taxon>Staphylococcaceae</taxon>
        <taxon>Staphylococcus</taxon>
    </lineage>
</organism>
<proteinExistence type="inferred from homology"/>
<feature type="chain" id="PRO_1000185240" description="UPF0349 protein Sca_0544">
    <location>
        <begin position="1"/>
        <end position="78"/>
    </location>
</feature>
<gene>
    <name type="ordered locus">Sca_0544</name>
</gene>
<name>Y544_STACT</name>